<feature type="chain" id="PRO_0000219150" description="Beta-1,3-galactosyltransferase 2">
    <location>
        <begin position="1"/>
        <end position="422"/>
    </location>
</feature>
<feature type="topological domain" description="Cytoplasmic" evidence="2">
    <location>
        <begin position="1"/>
        <end position="24"/>
    </location>
</feature>
<feature type="transmembrane region" description="Helical; Signal-anchor for type II membrane protein" evidence="2">
    <location>
        <begin position="25"/>
        <end position="45"/>
    </location>
</feature>
<feature type="topological domain" description="Lumenal" evidence="2">
    <location>
        <begin position="46"/>
        <end position="422"/>
    </location>
</feature>
<feature type="region of interest" description="Disordered" evidence="3">
    <location>
        <begin position="90"/>
        <end position="110"/>
    </location>
</feature>
<feature type="glycosylation site" description="N-linked (GlcNAc...) asparagine" evidence="2">
    <location>
        <position position="75"/>
    </location>
</feature>
<feature type="glycosylation site" description="N-linked (GlcNAc...) asparagine" evidence="2">
    <location>
        <position position="100"/>
    </location>
</feature>
<feature type="glycosylation site" description="N-linked (GlcNAc...) asparagine" evidence="2">
    <location>
        <position position="119"/>
    </location>
</feature>
<feature type="glycosylation site" description="N-linked (GlcNAc...) asparagine" evidence="2">
    <location>
        <position position="176"/>
    </location>
</feature>
<feature type="glycosylation site" description="N-linked (GlcNAc...) asparagine" evidence="2">
    <location>
        <position position="226"/>
    </location>
</feature>
<feature type="sequence conflict" description="In Ref. 3; AAG60610." evidence="6" ref="3">
    <original>Q</original>
    <variation>R</variation>
    <location>
        <position position="172"/>
    </location>
</feature>
<organism>
    <name type="scientific">Homo sapiens</name>
    <name type="common">Human</name>
    <dbReference type="NCBI Taxonomy" id="9606"/>
    <lineage>
        <taxon>Eukaryota</taxon>
        <taxon>Metazoa</taxon>
        <taxon>Chordata</taxon>
        <taxon>Craniata</taxon>
        <taxon>Vertebrata</taxon>
        <taxon>Euteleostomi</taxon>
        <taxon>Mammalia</taxon>
        <taxon>Eutheria</taxon>
        <taxon>Euarchontoglires</taxon>
        <taxon>Primates</taxon>
        <taxon>Haplorrhini</taxon>
        <taxon>Catarrhini</taxon>
        <taxon>Hominidae</taxon>
        <taxon>Homo</taxon>
    </lineage>
</organism>
<comment type="function">
    <text evidence="4 5">Beta-1,3-galactosyltransferase that transfers galactose from UDP-galactose to substrates with a terminal beta-N-acetylglucosamine (beta-GlcNAc) residue. Can also utilize substrates with a terminal galactose residue, albeit with lower efficiency. Involved in the biosynthesis of the carbohydrate moieties of glycolipids and glycoproteins. Inactive towards substrates with terminal alpha-N-acetylglucosamine (alpha-GlcNAc) or alpha-N-acetylgalactosamine (alpha-GalNAc) residues.</text>
</comment>
<comment type="catalytic activity">
    <reaction evidence="4 5">
        <text>an N-acetyl-beta-D-glucosaminyl derivative + UDP-alpha-D-galactose = a beta-D-galactosyl-(1-&gt;3)-N-acetyl-beta-D-glucosaminyl derivative + UDP + H(+)</text>
        <dbReference type="Rhea" id="RHEA:53432"/>
        <dbReference type="ChEBI" id="CHEBI:15378"/>
        <dbReference type="ChEBI" id="CHEBI:58223"/>
        <dbReference type="ChEBI" id="CHEBI:61631"/>
        <dbReference type="ChEBI" id="CHEBI:66914"/>
        <dbReference type="ChEBI" id="CHEBI:133506"/>
        <dbReference type="EC" id="2.4.1.86"/>
    </reaction>
</comment>
<comment type="catalytic activity">
    <reaction evidence="5">
        <text>a beta-D-GlcNAc-(1-&gt;3)-beta-D-Gal-(1-&gt;4)-beta-D-Glc-(1&lt;-&gt;1)-Cer(d18:1(4E)) + UDP-alpha-D-galactose = a beta-D-Gal-(1-&gt;3)-beta-D-GlcNAc-(1-&gt;3)-beta-D-Gal-(1-&gt;4)-beta-D-Glc-(1&lt;-&gt;1')-Cer(d18:1(4E)) + UDP + H(+)</text>
        <dbReference type="Rhea" id="RHEA:16045"/>
        <dbReference type="ChEBI" id="CHEBI:15378"/>
        <dbReference type="ChEBI" id="CHEBI:17103"/>
        <dbReference type="ChEBI" id="CHEBI:17292"/>
        <dbReference type="ChEBI" id="CHEBI:58223"/>
        <dbReference type="ChEBI" id="CHEBI:66914"/>
        <dbReference type="EC" id="2.4.1.86"/>
    </reaction>
    <physiologicalReaction direction="left-to-right" evidence="5">
        <dbReference type="Rhea" id="RHEA:16046"/>
    </physiologicalReaction>
</comment>
<comment type="catalytic activity">
    <reaction evidence="5">
        <text>a neolactoside IV(3)-beta-GlcNAc-nLc4Cer(d18:1(4E)) + UDP-alpha-D-galactose = a neolactoside IV(3)-beta-[Gal-beta-(1-&gt;3)-GlcNAc]-nLc4Cer(d18:1(4E)) + UDP + H(+)</text>
        <dbReference type="Rhea" id="RHEA:41936"/>
        <dbReference type="ChEBI" id="CHEBI:15378"/>
        <dbReference type="ChEBI" id="CHEBI:58223"/>
        <dbReference type="ChEBI" id="CHEBI:66914"/>
        <dbReference type="ChEBI" id="CHEBI:78565"/>
        <dbReference type="ChEBI" id="CHEBI:142448"/>
    </reaction>
    <physiologicalReaction direction="left-to-right" evidence="5">
        <dbReference type="Rhea" id="RHEA:41937"/>
    </physiologicalReaction>
</comment>
<comment type="cofactor">
    <cofactor evidence="1">
        <name>Mn(2+)</name>
        <dbReference type="ChEBI" id="CHEBI:29035"/>
    </cofactor>
</comment>
<comment type="biophysicochemical properties">
    <kinetics>
        <KM evidence="5">90 uM for UDP-alpha-D-galactose</KM>
    </kinetics>
</comment>
<comment type="pathway">
    <text>Protein modification; protein glycosylation.</text>
</comment>
<comment type="interaction">
    <interactant intactId="EBI-3921705">
        <id>O43825</id>
    </interactant>
    <interactant intactId="EBI-1104907">
        <id>Q3T906</id>
        <label>GNPTAB</label>
    </interactant>
    <organismsDiffer>false</organismsDiffer>
    <experiments>3</experiments>
</comment>
<comment type="subcellular location">
    <subcellularLocation>
        <location evidence="6">Golgi apparatus membrane</location>
        <topology evidence="6">Single-pass type II membrane protein</topology>
    </subcellularLocation>
</comment>
<comment type="tissue specificity">
    <text evidence="4 5">Detected in heart and brain.</text>
</comment>
<comment type="similarity">
    <text evidence="6">Belongs to the glycosyltransferase 31 family.</text>
</comment>
<comment type="online information" name="Functional Glycomics Gateway - GTase">
    <link uri="http://www.functionalglycomics.org/glycomics/molecule/jsp/glycoEnzyme/viewGlycoEnzyme.jsp?gbpId=gt_hum_430"/>
    <text>Beta-1,3-galactosyltransferase 2</text>
</comment>
<name>B3GT2_HUMAN</name>
<protein>
    <recommendedName>
        <fullName evidence="6">Beta-1,3-galactosyltransferase 2</fullName>
        <shortName>Beta-1,3-GalTase 2</shortName>
        <shortName>Beta3Gal-T2</shortName>
        <shortName>Beta3GalT2</shortName>
        <ecNumber evidence="4 5">2.4.1.86</ecNumber>
    </recommendedName>
    <alternativeName>
        <fullName>UDP-galactose:2-acetamido-2-deoxy-D-glucose 3beta-galactosyltransferase 2</fullName>
    </alternativeName>
</protein>
<reference key="1">
    <citation type="journal article" date="1998" name="J. Biol. Chem.">
        <title>Cloning of a human UDP-galactose:2-acetamido-2-deoxy-D-glucose 3beta-galactosyltransferase catalyzing the formation of type 1 chains.</title>
        <authorList>
            <person name="Kolbinger F."/>
            <person name="Streiff M.B."/>
            <person name="Katopodis A.G."/>
        </authorList>
    </citation>
    <scope>NUCLEOTIDE SEQUENCE [MRNA]</scope>
    <scope>FUNCTION</scope>
    <scope>CATALYTIC ACTIVITY</scope>
    <scope>TISSUE SPECIFICITY</scope>
    <source>
        <tissue>Brain</tissue>
    </source>
</reference>
<reference key="2">
    <citation type="journal article" date="1998" name="J. Biol. Chem.">
        <title>A family of human beta3-galactosyltransferases. Characterization of four members of a UDP-galactose:beta-N-acetyl-glucosamine/beta-N-acetyl-galactosamine beta-1,3-galactosyltransferase family.</title>
        <authorList>
            <person name="Amado M."/>
            <person name="Almeida R."/>
            <person name="Carneiro F."/>
            <person name="Levery S.B."/>
            <person name="Holmes E.H."/>
            <person name="Nomoto M."/>
            <person name="Hollingsworth M.A."/>
            <person name="Hassan H."/>
            <person name="Schwientek T."/>
            <person name="Nielsen P.A."/>
            <person name="Bennett E.P."/>
            <person name="Clausen H."/>
        </authorList>
    </citation>
    <scope>NUCLEOTIDE SEQUENCE [MRNA]</scope>
    <scope>FUNCTION</scope>
    <scope>CATALYTIC ACTIVITY</scope>
    <scope>BIOPHYSICOCHEMICAL PROPERTIES</scope>
    <scope>TISSUE SPECIFICITY</scope>
    <source>
        <tissue>Fetal brain</tissue>
    </source>
</reference>
<reference key="3">
    <citation type="journal article" date="2001" name="Genomics">
        <title>Cloning and characterization of 13 novel transcripts and the human RGS8 gene from the 1q25 region encompassing the hereditary prostate cancer (HPC1) locus.</title>
        <authorList>
            <person name="Sood R."/>
            <person name="Bonner T.I."/>
            <person name="Malakowska I."/>
            <person name="Stephan D.A."/>
            <person name="Robbins C.M."/>
            <person name="Connors T.D."/>
            <person name="Morgenbesser S.D."/>
            <person name="Su K."/>
            <person name="Faruque M.U."/>
            <person name="Pinkett H."/>
            <person name="Graham C."/>
            <person name="Baxevanis A.D."/>
            <person name="Klinger K.W."/>
            <person name="Landes G.M."/>
            <person name="Trent J.M."/>
            <person name="Carpten J.D."/>
        </authorList>
    </citation>
    <scope>NUCLEOTIDE SEQUENCE [MRNA]</scope>
</reference>
<reference key="4">
    <citation type="journal article" date="2004" name="Nat. Genet.">
        <title>Complete sequencing and characterization of 21,243 full-length human cDNAs.</title>
        <authorList>
            <person name="Ota T."/>
            <person name="Suzuki Y."/>
            <person name="Nishikawa T."/>
            <person name="Otsuki T."/>
            <person name="Sugiyama T."/>
            <person name="Irie R."/>
            <person name="Wakamatsu A."/>
            <person name="Hayashi K."/>
            <person name="Sato H."/>
            <person name="Nagai K."/>
            <person name="Kimura K."/>
            <person name="Makita H."/>
            <person name="Sekine M."/>
            <person name="Obayashi M."/>
            <person name="Nishi T."/>
            <person name="Shibahara T."/>
            <person name="Tanaka T."/>
            <person name="Ishii S."/>
            <person name="Yamamoto J."/>
            <person name="Saito K."/>
            <person name="Kawai Y."/>
            <person name="Isono Y."/>
            <person name="Nakamura Y."/>
            <person name="Nagahari K."/>
            <person name="Murakami K."/>
            <person name="Yasuda T."/>
            <person name="Iwayanagi T."/>
            <person name="Wagatsuma M."/>
            <person name="Shiratori A."/>
            <person name="Sudo H."/>
            <person name="Hosoiri T."/>
            <person name="Kaku Y."/>
            <person name="Kodaira H."/>
            <person name="Kondo H."/>
            <person name="Sugawara M."/>
            <person name="Takahashi M."/>
            <person name="Kanda K."/>
            <person name="Yokoi T."/>
            <person name="Furuya T."/>
            <person name="Kikkawa E."/>
            <person name="Omura Y."/>
            <person name="Abe K."/>
            <person name="Kamihara K."/>
            <person name="Katsuta N."/>
            <person name="Sato K."/>
            <person name="Tanikawa M."/>
            <person name="Yamazaki M."/>
            <person name="Ninomiya K."/>
            <person name="Ishibashi T."/>
            <person name="Yamashita H."/>
            <person name="Murakawa K."/>
            <person name="Fujimori K."/>
            <person name="Tanai H."/>
            <person name="Kimata M."/>
            <person name="Watanabe M."/>
            <person name="Hiraoka S."/>
            <person name="Chiba Y."/>
            <person name="Ishida S."/>
            <person name="Ono Y."/>
            <person name="Takiguchi S."/>
            <person name="Watanabe S."/>
            <person name="Yosida M."/>
            <person name="Hotuta T."/>
            <person name="Kusano J."/>
            <person name="Kanehori K."/>
            <person name="Takahashi-Fujii A."/>
            <person name="Hara H."/>
            <person name="Tanase T.-O."/>
            <person name="Nomura Y."/>
            <person name="Togiya S."/>
            <person name="Komai F."/>
            <person name="Hara R."/>
            <person name="Takeuchi K."/>
            <person name="Arita M."/>
            <person name="Imose N."/>
            <person name="Musashino K."/>
            <person name="Yuuki H."/>
            <person name="Oshima A."/>
            <person name="Sasaki N."/>
            <person name="Aotsuka S."/>
            <person name="Yoshikawa Y."/>
            <person name="Matsunawa H."/>
            <person name="Ichihara T."/>
            <person name="Shiohata N."/>
            <person name="Sano S."/>
            <person name="Moriya S."/>
            <person name="Momiyama H."/>
            <person name="Satoh N."/>
            <person name="Takami S."/>
            <person name="Terashima Y."/>
            <person name="Suzuki O."/>
            <person name="Nakagawa S."/>
            <person name="Senoh A."/>
            <person name="Mizoguchi H."/>
            <person name="Goto Y."/>
            <person name="Shimizu F."/>
            <person name="Wakebe H."/>
            <person name="Hishigaki H."/>
            <person name="Watanabe T."/>
            <person name="Sugiyama A."/>
            <person name="Takemoto M."/>
            <person name="Kawakami B."/>
            <person name="Yamazaki M."/>
            <person name="Watanabe K."/>
            <person name="Kumagai A."/>
            <person name="Itakura S."/>
            <person name="Fukuzumi Y."/>
            <person name="Fujimori Y."/>
            <person name="Komiyama M."/>
            <person name="Tashiro H."/>
            <person name="Tanigami A."/>
            <person name="Fujiwara T."/>
            <person name="Ono T."/>
            <person name="Yamada K."/>
            <person name="Fujii Y."/>
            <person name="Ozaki K."/>
            <person name="Hirao M."/>
            <person name="Ohmori Y."/>
            <person name="Kawabata A."/>
            <person name="Hikiji T."/>
            <person name="Kobatake N."/>
            <person name="Inagaki H."/>
            <person name="Ikema Y."/>
            <person name="Okamoto S."/>
            <person name="Okitani R."/>
            <person name="Kawakami T."/>
            <person name="Noguchi S."/>
            <person name="Itoh T."/>
            <person name="Shigeta K."/>
            <person name="Senba T."/>
            <person name="Matsumura K."/>
            <person name="Nakajima Y."/>
            <person name="Mizuno T."/>
            <person name="Morinaga M."/>
            <person name="Sasaki M."/>
            <person name="Togashi T."/>
            <person name="Oyama M."/>
            <person name="Hata H."/>
            <person name="Watanabe M."/>
            <person name="Komatsu T."/>
            <person name="Mizushima-Sugano J."/>
            <person name="Satoh T."/>
            <person name="Shirai Y."/>
            <person name="Takahashi Y."/>
            <person name="Nakagawa K."/>
            <person name="Okumura K."/>
            <person name="Nagase T."/>
            <person name="Nomura N."/>
            <person name="Kikuchi H."/>
            <person name="Masuho Y."/>
            <person name="Yamashita R."/>
            <person name="Nakai K."/>
            <person name="Yada T."/>
            <person name="Nakamura Y."/>
            <person name="Ohara O."/>
            <person name="Isogai T."/>
            <person name="Sugano S."/>
        </authorList>
    </citation>
    <scope>NUCLEOTIDE SEQUENCE [LARGE SCALE MRNA]</scope>
    <source>
        <tissue>Amygdala</tissue>
    </source>
</reference>
<reference key="5">
    <citation type="journal article" date="2006" name="Nature">
        <title>The DNA sequence and biological annotation of human chromosome 1.</title>
        <authorList>
            <person name="Gregory S.G."/>
            <person name="Barlow K.F."/>
            <person name="McLay K.E."/>
            <person name="Kaul R."/>
            <person name="Swarbreck D."/>
            <person name="Dunham A."/>
            <person name="Scott C.E."/>
            <person name="Howe K.L."/>
            <person name="Woodfine K."/>
            <person name="Spencer C.C.A."/>
            <person name="Jones M.C."/>
            <person name="Gillson C."/>
            <person name="Searle S."/>
            <person name="Zhou Y."/>
            <person name="Kokocinski F."/>
            <person name="McDonald L."/>
            <person name="Evans R."/>
            <person name="Phillips K."/>
            <person name="Atkinson A."/>
            <person name="Cooper R."/>
            <person name="Jones C."/>
            <person name="Hall R.E."/>
            <person name="Andrews T.D."/>
            <person name="Lloyd C."/>
            <person name="Ainscough R."/>
            <person name="Almeida J.P."/>
            <person name="Ambrose K.D."/>
            <person name="Anderson F."/>
            <person name="Andrew R.W."/>
            <person name="Ashwell R.I.S."/>
            <person name="Aubin K."/>
            <person name="Babbage A.K."/>
            <person name="Bagguley C.L."/>
            <person name="Bailey J."/>
            <person name="Beasley H."/>
            <person name="Bethel G."/>
            <person name="Bird C.P."/>
            <person name="Bray-Allen S."/>
            <person name="Brown J.Y."/>
            <person name="Brown A.J."/>
            <person name="Buckley D."/>
            <person name="Burton J."/>
            <person name="Bye J."/>
            <person name="Carder C."/>
            <person name="Chapman J.C."/>
            <person name="Clark S.Y."/>
            <person name="Clarke G."/>
            <person name="Clee C."/>
            <person name="Cobley V."/>
            <person name="Collier R.E."/>
            <person name="Corby N."/>
            <person name="Coville G.J."/>
            <person name="Davies J."/>
            <person name="Deadman R."/>
            <person name="Dunn M."/>
            <person name="Earthrowl M."/>
            <person name="Ellington A.G."/>
            <person name="Errington H."/>
            <person name="Frankish A."/>
            <person name="Frankland J."/>
            <person name="French L."/>
            <person name="Garner P."/>
            <person name="Garnett J."/>
            <person name="Gay L."/>
            <person name="Ghori M.R.J."/>
            <person name="Gibson R."/>
            <person name="Gilby L.M."/>
            <person name="Gillett W."/>
            <person name="Glithero R.J."/>
            <person name="Grafham D.V."/>
            <person name="Griffiths C."/>
            <person name="Griffiths-Jones S."/>
            <person name="Grocock R."/>
            <person name="Hammond S."/>
            <person name="Harrison E.S.I."/>
            <person name="Hart E."/>
            <person name="Haugen E."/>
            <person name="Heath P.D."/>
            <person name="Holmes S."/>
            <person name="Holt K."/>
            <person name="Howden P.J."/>
            <person name="Hunt A.R."/>
            <person name="Hunt S.E."/>
            <person name="Hunter G."/>
            <person name="Isherwood J."/>
            <person name="James R."/>
            <person name="Johnson C."/>
            <person name="Johnson D."/>
            <person name="Joy A."/>
            <person name="Kay M."/>
            <person name="Kershaw J.K."/>
            <person name="Kibukawa M."/>
            <person name="Kimberley A.M."/>
            <person name="King A."/>
            <person name="Knights A.J."/>
            <person name="Lad H."/>
            <person name="Laird G."/>
            <person name="Lawlor S."/>
            <person name="Leongamornlert D.A."/>
            <person name="Lloyd D.M."/>
            <person name="Loveland J."/>
            <person name="Lovell J."/>
            <person name="Lush M.J."/>
            <person name="Lyne R."/>
            <person name="Martin S."/>
            <person name="Mashreghi-Mohammadi M."/>
            <person name="Matthews L."/>
            <person name="Matthews N.S.W."/>
            <person name="McLaren S."/>
            <person name="Milne S."/>
            <person name="Mistry S."/>
            <person name="Moore M.J.F."/>
            <person name="Nickerson T."/>
            <person name="O'Dell C.N."/>
            <person name="Oliver K."/>
            <person name="Palmeiri A."/>
            <person name="Palmer S.A."/>
            <person name="Parker A."/>
            <person name="Patel D."/>
            <person name="Pearce A.V."/>
            <person name="Peck A.I."/>
            <person name="Pelan S."/>
            <person name="Phelps K."/>
            <person name="Phillimore B.J."/>
            <person name="Plumb R."/>
            <person name="Rajan J."/>
            <person name="Raymond C."/>
            <person name="Rouse G."/>
            <person name="Saenphimmachak C."/>
            <person name="Sehra H.K."/>
            <person name="Sheridan E."/>
            <person name="Shownkeen R."/>
            <person name="Sims S."/>
            <person name="Skuce C.D."/>
            <person name="Smith M."/>
            <person name="Steward C."/>
            <person name="Subramanian S."/>
            <person name="Sycamore N."/>
            <person name="Tracey A."/>
            <person name="Tromans A."/>
            <person name="Van Helmond Z."/>
            <person name="Wall M."/>
            <person name="Wallis J.M."/>
            <person name="White S."/>
            <person name="Whitehead S.L."/>
            <person name="Wilkinson J.E."/>
            <person name="Willey D.L."/>
            <person name="Williams H."/>
            <person name="Wilming L."/>
            <person name="Wray P.W."/>
            <person name="Wu Z."/>
            <person name="Coulson A."/>
            <person name="Vaudin M."/>
            <person name="Sulston J.E."/>
            <person name="Durbin R.M."/>
            <person name="Hubbard T."/>
            <person name="Wooster R."/>
            <person name="Dunham I."/>
            <person name="Carter N.P."/>
            <person name="McVean G."/>
            <person name="Ross M.T."/>
            <person name="Harrow J."/>
            <person name="Olson M.V."/>
            <person name="Beck S."/>
            <person name="Rogers J."/>
            <person name="Bentley D.R."/>
        </authorList>
    </citation>
    <scope>NUCLEOTIDE SEQUENCE [LARGE SCALE GENOMIC DNA]</scope>
</reference>
<reference key="6">
    <citation type="submission" date="2005-07" db="EMBL/GenBank/DDBJ databases">
        <authorList>
            <person name="Mural R.J."/>
            <person name="Istrail S."/>
            <person name="Sutton G.G."/>
            <person name="Florea L."/>
            <person name="Halpern A.L."/>
            <person name="Mobarry C.M."/>
            <person name="Lippert R."/>
            <person name="Walenz B."/>
            <person name="Shatkay H."/>
            <person name="Dew I."/>
            <person name="Miller J.R."/>
            <person name="Flanigan M.J."/>
            <person name="Edwards N.J."/>
            <person name="Bolanos R."/>
            <person name="Fasulo D."/>
            <person name="Halldorsson B.V."/>
            <person name="Hannenhalli S."/>
            <person name="Turner R."/>
            <person name="Yooseph S."/>
            <person name="Lu F."/>
            <person name="Nusskern D.R."/>
            <person name="Shue B.C."/>
            <person name="Zheng X.H."/>
            <person name="Zhong F."/>
            <person name="Delcher A.L."/>
            <person name="Huson D.H."/>
            <person name="Kravitz S.A."/>
            <person name="Mouchard L."/>
            <person name="Reinert K."/>
            <person name="Remington K.A."/>
            <person name="Clark A.G."/>
            <person name="Waterman M.S."/>
            <person name="Eichler E.E."/>
            <person name="Adams M.D."/>
            <person name="Hunkapiller M.W."/>
            <person name="Myers E.W."/>
            <person name="Venter J.C."/>
        </authorList>
    </citation>
    <scope>NUCLEOTIDE SEQUENCE [LARGE SCALE GENOMIC DNA]</scope>
</reference>
<reference key="7">
    <citation type="journal article" date="2004" name="Genome Res.">
        <title>The status, quality, and expansion of the NIH full-length cDNA project: the Mammalian Gene Collection (MGC).</title>
        <authorList>
            <consortium name="The MGC Project Team"/>
        </authorList>
    </citation>
    <scope>NUCLEOTIDE SEQUENCE [LARGE SCALE MRNA]</scope>
    <source>
        <tissue>Brain</tissue>
    </source>
</reference>
<gene>
    <name evidence="7" type="primary">B3GALT2</name>
</gene>
<keyword id="KW-0325">Glycoprotein</keyword>
<keyword id="KW-0328">Glycosyltransferase</keyword>
<keyword id="KW-0333">Golgi apparatus</keyword>
<keyword id="KW-0443">Lipid metabolism</keyword>
<keyword id="KW-0464">Manganese</keyword>
<keyword id="KW-0472">Membrane</keyword>
<keyword id="KW-1267">Proteomics identification</keyword>
<keyword id="KW-1185">Reference proteome</keyword>
<keyword id="KW-0735">Signal-anchor</keyword>
<keyword id="KW-0808">Transferase</keyword>
<keyword id="KW-0812">Transmembrane</keyword>
<keyword id="KW-1133">Transmembrane helix</keyword>
<sequence>MLQWRRRHCCFAKMTWNAKRSLFRTHLIGVLSLVFLFAMFLFFNHHDWLPGRAGFKENPVTYTFRGFRSTKSETNHSSLRNIWKETVPQTLRPQTATNSNNTDLSPQGVTGLENTLSANGSIYNEKGTGHPNSYHFKYIINEPEKCQEKSPFLILLIAAEPGQIEARRAIRQTWGNESLAPGIQITRIFLLGLSIKLNGYLQRAILEESRQYHDIIQQEYLDTYYNLTIKTLMGMNWVATYCPHIPYVMKTDSDMFVNTEYLINKLLKPDLPPRHNYFTGYLMRGYAPNRNKDSKWYMPPDLYPSERYPVFCSGTGYVFSGDLAEKIFKVSLGIRRLHLEDVYVGICLAKLRIDPVPPPNEFVFNHWRVSYSSCKYSHLITSHQFQPSELIKYWNHLQQNKHNACANAAKEKAGRYRHRKLH</sequence>
<accession>O43825</accession>
<accession>B2RAB1</accession>
<accession>Q9BZQ9</accession>
<evidence type="ECO:0000250" key="1"/>
<evidence type="ECO:0000255" key="2"/>
<evidence type="ECO:0000256" key="3">
    <source>
        <dbReference type="SAM" id="MobiDB-lite"/>
    </source>
</evidence>
<evidence type="ECO:0000269" key="4">
    <source>
    </source>
</evidence>
<evidence type="ECO:0000269" key="5">
    <source>
    </source>
</evidence>
<evidence type="ECO:0000305" key="6"/>
<evidence type="ECO:0000312" key="7">
    <source>
        <dbReference type="HGNC" id="HGNC:917"/>
    </source>
</evidence>
<dbReference type="EC" id="2.4.1.86" evidence="4 5"/>
<dbReference type="EMBL" id="Y15014">
    <property type="protein sequence ID" value="CAA75245.1"/>
    <property type="molecule type" value="mRNA"/>
</dbReference>
<dbReference type="EMBL" id="Y15060">
    <property type="protein sequence ID" value="CAA75344.1"/>
    <property type="molecule type" value="mRNA"/>
</dbReference>
<dbReference type="EMBL" id="AF288390">
    <property type="protein sequence ID" value="AAG60610.1"/>
    <property type="molecule type" value="mRNA"/>
</dbReference>
<dbReference type="EMBL" id="AK314116">
    <property type="protein sequence ID" value="BAG36808.1"/>
    <property type="molecule type" value="mRNA"/>
</dbReference>
<dbReference type="EMBL" id="AL390863">
    <property type="status" value="NOT_ANNOTATED_CDS"/>
    <property type="molecule type" value="Genomic_DNA"/>
</dbReference>
<dbReference type="EMBL" id="CH471067">
    <property type="protein sequence ID" value="EAW91251.1"/>
    <property type="molecule type" value="Genomic_DNA"/>
</dbReference>
<dbReference type="EMBL" id="BC022507">
    <property type="protein sequence ID" value="AAH22507.1"/>
    <property type="molecule type" value="mRNA"/>
</dbReference>
<dbReference type="CCDS" id="CCDS1383.1"/>
<dbReference type="RefSeq" id="NP_003774.1">
    <property type="nucleotide sequence ID" value="NM_003783.3"/>
</dbReference>
<dbReference type="SMR" id="O43825"/>
<dbReference type="BioGRID" id="114250">
    <property type="interactions" value="11"/>
</dbReference>
<dbReference type="FunCoup" id="O43825">
    <property type="interactions" value="125"/>
</dbReference>
<dbReference type="IntAct" id="O43825">
    <property type="interactions" value="7"/>
</dbReference>
<dbReference type="STRING" id="9606.ENSP00000356404"/>
<dbReference type="SwissLipids" id="SLP:000000773"/>
<dbReference type="CAZy" id="GT31">
    <property type="family name" value="Glycosyltransferase Family 31"/>
</dbReference>
<dbReference type="GlyCosmos" id="O43825">
    <property type="glycosylation" value="5 sites, No reported glycans"/>
</dbReference>
<dbReference type="GlyGen" id="O43825">
    <property type="glycosylation" value="5 sites"/>
</dbReference>
<dbReference type="iPTMnet" id="O43825"/>
<dbReference type="PhosphoSitePlus" id="O43825"/>
<dbReference type="BioMuta" id="B3GALT2"/>
<dbReference type="MassIVE" id="O43825"/>
<dbReference type="PaxDb" id="9606-ENSP00000356404"/>
<dbReference type="PeptideAtlas" id="O43825"/>
<dbReference type="ProteomicsDB" id="49191"/>
<dbReference type="Antibodypedia" id="34468">
    <property type="antibodies" value="162 antibodies from 26 providers"/>
</dbReference>
<dbReference type="DNASU" id="8707"/>
<dbReference type="Ensembl" id="ENST00000367434.5">
    <property type="protein sequence ID" value="ENSP00000356404.4"/>
    <property type="gene ID" value="ENSG00000162630.6"/>
</dbReference>
<dbReference type="GeneID" id="8707"/>
<dbReference type="KEGG" id="hsa:8707"/>
<dbReference type="MANE-Select" id="ENST00000367434.5">
    <property type="protein sequence ID" value="ENSP00000356404.4"/>
    <property type="RefSeq nucleotide sequence ID" value="NM_003783.3"/>
    <property type="RefSeq protein sequence ID" value="NP_003774.1"/>
</dbReference>
<dbReference type="UCSC" id="uc001gtc.5">
    <property type="organism name" value="human"/>
</dbReference>
<dbReference type="AGR" id="HGNC:917"/>
<dbReference type="CTD" id="8707"/>
<dbReference type="DisGeNET" id="8707"/>
<dbReference type="GeneCards" id="B3GALT2"/>
<dbReference type="HGNC" id="HGNC:917">
    <property type="gene designation" value="B3GALT2"/>
</dbReference>
<dbReference type="HPA" id="ENSG00000162630">
    <property type="expression patterns" value="Tissue enhanced (brain, gallbladder, heart muscle)"/>
</dbReference>
<dbReference type="MIM" id="603018">
    <property type="type" value="gene"/>
</dbReference>
<dbReference type="neXtProt" id="NX_O43825"/>
<dbReference type="OpenTargets" id="ENSG00000162630"/>
<dbReference type="PharmGKB" id="PA25210"/>
<dbReference type="VEuPathDB" id="HostDB:ENSG00000162630"/>
<dbReference type="eggNOG" id="KOG2287">
    <property type="taxonomic scope" value="Eukaryota"/>
</dbReference>
<dbReference type="GeneTree" id="ENSGT00940000155117"/>
<dbReference type="HOGENOM" id="CLU_036849_2_1_1"/>
<dbReference type="InParanoid" id="O43825"/>
<dbReference type="OMA" id="TSYHFKY"/>
<dbReference type="OrthoDB" id="5512589at2759"/>
<dbReference type="PAN-GO" id="O43825">
    <property type="GO annotations" value="2 GO annotations based on evolutionary models"/>
</dbReference>
<dbReference type="PhylomeDB" id="O43825"/>
<dbReference type="TreeFam" id="TF318639"/>
<dbReference type="BRENDA" id="2.4.1.62">
    <property type="organism ID" value="2681"/>
</dbReference>
<dbReference type="PathwayCommons" id="O43825"/>
<dbReference type="Reactome" id="R-HSA-9037629">
    <property type="pathway name" value="Lewis blood group biosynthesis"/>
</dbReference>
<dbReference type="SABIO-RK" id="O43825"/>
<dbReference type="SignaLink" id="O43825"/>
<dbReference type="UniPathway" id="UPA00378"/>
<dbReference type="BioGRID-ORCS" id="8707">
    <property type="hits" value="9 hits in 1138 CRISPR screens"/>
</dbReference>
<dbReference type="GenomeRNAi" id="8707"/>
<dbReference type="Pharos" id="O43825">
    <property type="development level" value="Tbio"/>
</dbReference>
<dbReference type="PRO" id="PR:O43825"/>
<dbReference type="Proteomes" id="UP000005640">
    <property type="component" value="Chromosome 1"/>
</dbReference>
<dbReference type="RNAct" id="O43825">
    <property type="molecule type" value="protein"/>
</dbReference>
<dbReference type="Bgee" id="ENSG00000162630">
    <property type="expression patterns" value="Expressed in cortical plate and 138 other cell types or tissues"/>
</dbReference>
<dbReference type="GO" id="GO:0000139">
    <property type="term" value="C:Golgi membrane"/>
    <property type="evidence" value="ECO:0000318"/>
    <property type="project" value="GO_Central"/>
</dbReference>
<dbReference type="GO" id="GO:0008499">
    <property type="term" value="F:N-acetyl-beta-D-glucosaminide beta-(1,3)-galactosyltransferase activity"/>
    <property type="evidence" value="ECO:0000314"/>
    <property type="project" value="BHF-UCL"/>
</dbReference>
<dbReference type="GO" id="GO:0006682">
    <property type="term" value="P:galactosylceramide biosynthetic process"/>
    <property type="evidence" value="ECO:0000314"/>
    <property type="project" value="BHF-UCL"/>
</dbReference>
<dbReference type="GO" id="GO:0009312">
    <property type="term" value="P:oligosaccharide biosynthetic process"/>
    <property type="evidence" value="ECO:0000304"/>
    <property type="project" value="Reactome"/>
</dbReference>
<dbReference type="GO" id="GO:0006486">
    <property type="term" value="P:protein glycosylation"/>
    <property type="evidence" value="ECO:0000304"/>
    <property type="project" value="ProtInc"/>
</dbReference>
<dbReference type="GO" id="GO:0006493">
    <property type="term" value="P:protein O-linked glycosylation"/>
    <property type="evidence" value="ECO:0000318"/>
    <property type="project" value="GO_Central"/>
</dbReference>
<dbReference type="FunFam" id="3.90.550.50:FF:000001">
    <property type="entry name" value="Hexosyltransferase"/>
    <property type="match status" value="1"/>
</dbReference>
<dbReference type="Gene3D" id="3.90.550.50">
    <property type="match status" value="1"/>
</dbReference>
<dbReference type="InterPro" id="IPR045821">
    <property type="entry name" value="B3GT2_N"/>
</dbReference>
<dbReference type="InterPro" id="IPR002659">
    <property type="entry name" value="Glyco_trans_31"/>
</dbReference>
<dbReference type="PANTHER" id="PTHR11214:SF19">
    <property type="entry name" value="BETA-1,3-GALACTOSYLTRANSFERASE 2"/>
    <property type="match status" value="1"/>
</dbReference>
<dbReference type="PANTHER" id="PTHR11214">
    <property type="entry name" value="BETA-1,3-N-ACETYLGLUCOSAMINYLTRANSFERASE"/>
    <property type="match status" value="1"/>
</dbReference>
<dbReference type="Pfam" id="PF19341">
    <property type="entry name" value="B3GALT2_N"/>
    <property type="match status" value="1"/>
</dbReference>
<dbReference type="Pfam" id="PF01762">
    <property type="entry name" value="Galactosyl_T"/>
    <property type="match status" value="1"/>
</dbReference>
<proteinExistence type="evidence at protein level"/>